<comment type="function">
    <text evidence="1">Lectin involved in innate immunity.</text>
</comment>
<comment type="subcellular location">
    <subcellularLocation>
        <location evidence="4">Secreted</location>
    </subcellularLocation>
</comment>
<comment type="tissue specificity">
    <text evidence="4">Expressed by the venom gland.</text>
</comment>
<name>TLLP_PHONI</name>
<organism>
    <name type="scientific">Phoneutria nigriventer</name>
    <name type="common">Brazilian armed spider</name>
    <name type="synonym">Ctenus nigriventer</name>
    <dbReference type="NCBI Taxonomy" id="6918"/>
    <lineage>
        <taxon>Eukaryota</taxon>
        <taxon>Metazoa</taxon>
        <taxon>Ecdysozoa</taxon>
        <taxon>Arthropoda</taxon>
        <taxon>Chelicerata</taxon>
        <taxon>Arachnida</taxon>
        <taxon>Araneae</taxon>
        <taxon>Araneomorphae</taxon>
        <taxon>Entelegynae</taxon>
        <taxon>Lycosoidea</taxon>
        <taxon>Ctenidae</taxon>
        <taxon>Phoneutria</taxon>
    </lineage>
</organism>
<proteinExistence type="evidence at protein level"/>
<feature type="chain" id="PRO_0000260047" description="Techylectin-like protein">
    <location>
        <begin position="1"/>
        <end position="225" status="greater than"/>
    </location>
</feature>
<feature type="domain" description="Fibrinogen C-terminal" evidence="3">
    <location>
        <begin position="32"/>
        <end position="225"/>
    </location>
</feature>
<feature type="short sequence motif" description="Cell attachment site" evidence="2">
    <location>
        <begin position="75"/>
        <end position="77"/>
    </location>
</feature>
<feature type="binding site" evidence="1">
    <location>
        <position position="164"/>
    </location>
    <ligand>
        <name>Ca(2+)</name>
        <dbReference type="ChEBI" id="CHEBI:29108"/>
    </ligand>
</feature>
<feature type="binding site" evidence="1">
    <location>
        <position position="170"/>
    </location>
    <ligand>
        <name>Ca(2+)</name>
        <dbReference type="ChEBI" id="CHEBI:29108"/>
    </ligand>
</feature>
<feature type="site" description="Implicated in ligand binding" evidence="1">
    <location>
        <position position="176"/>
    </location>
</feature>
<feature type="site" description="Implicated in ligand binding" evidence="1">
    <location>
        <position position="186"/>
    </location>
</feature>
<feature type="site" description="Implicated in ligand binding" evidence="1">
    <location>
        <position position="198"/>
    </location>
</feature>
<feature type="site" description="Implicated in ligand binding" evidence="1">
    <location>
        <position position="199"/>
    </location>
</feature>
<feature type="site" description="Implicated in ligand binding" evidence="1">
    <location>
        <position position="210"/>
    </location>
</feature>
<feature type="disulfide bond" evidence="1 3">
    <location>
        <begin position="41"/>
        <end position="60"/>
    </location>
</feature>
<feature type="disulfide bond" evidence="1 3">
    <location>
        <begin position="172"/>
        <end position="185"/>
    </location>
</feature>
<feature type="non-consecutive residues" evidence="5">
    <location>
        <begin position="47"/>
        <end position="48"/>
    </location>
</feature>
<feature type="non-consecutive residues" evidence="5">
    <location>
        <begin position="117"/>
        <end position="118"/>
    </location>
</feature>
<feature type="non-consecutive residues" evidence="5">
    <location>
        <begin position="196"/>
        <end position="197"/>
    </location>
</feature>
<feature type="non-terminal residue" evidence="5">
    <location>
        <position position="225"/>
    </location>
</feature>
<dbReference type="SMR" id="P85031"/>
<dbReference type="ArachnoServer" id="AS000012">
    <property type="toxin name" value="Techylectin-1-Phoneutria nigriventer"/>
</dbReference>
<dbReference type="GO" id="GO:0005615">
    <property type="term" value="C:extracellular space"/>
    <property type="evidence" value="ECO:0007669"/>
    <property type="project" value="TreeGrafter"/>
</dbReference>
<dbReference type="GO" id="GO:0030246">
    <property type="term" value="F:carbohydrate binding"/>
    <property type="evidence" value="ECO:0007669"/>
    <property type="project" value="UniProtKB-KW"/>
</dbReference>
<dbReference type="GO" id="GO:0046872">
    <property type="term" value="F:metal ion binding"/>
    <property type="evidence" value="ECO:0007669"/>
    <property type="project" value="UniProtKB-KW"/>
</dbReference>
<dbReference type="CDD" id="cd00087">
    <property type="entry name" value="FReD"/>
    <property type="match status" value="1"/>
</dbReference>
<dbReference type="Gene3D" id="3.90.215.10">
    <property type="entry name" value="Gamma Fibrinogen, chain A, domain 1"/>
    <property type="match status" value="1"/>
</dbReference>
<dbReference type="InterPro" id="IPR036056">
    <property type="entry name" value="Fibrinogen-like_C"/>
</dbReference>
<dbReference type="InterPro" id="IPR014716">
    <property type="entry name" value="Fibrinogen_a/b/g_C_1"/>
</dbReference>
<dbReference type="InterPro" id="IPR002181">
    <property type="entry name" value="Fibrinogen_a/b/g_C_dom"/>
</dbReference>
<dbReference type="InterPro" id="IPR050373">
    <property type="entry name" value="Fibrinogen_C-term_domain"/>
</dbReference>
<dbReference type="InterPro" id="IPR020837">
    <property type="entry name" value="Fibrinogen_CS"/>
</dbReference>
<dbReference type="NCBIfam" id="NF040941">
    <property type="entry name" value="GGGWT_bact"/>
    <property type="match status" value="1"/>
</dbReference>
<dbReference type="PANTHER" id="PTHR19143:SF458">
    <property type="entry name" value="FIBRINOGEN C-TERMINAL DOMAIN-CONTAINING PROTEIN-RELATED"/>
    <property type="match status" value="1"/>
</dbReference>
<dbReference type="PANTHER" id="PTHR19143">
    <property type="entry name" value="FIBRINOGEN/TENASCIN/ANGIOPOEITIN"/>
    <property type="match status" value="1"/>
</dbReference>
<dbReference type="Pfam" id="PF00147">
    <property type="entry name" value="Fibrinogen_C"/>
    <property type="match status" value="1"/>
</dbReference>
<dbReference type="SMART" id="SM00186">
    <property type="entry name" value="FBG"/>
    <property type="match status" value="1"/>
</dbReference>
<dbReference type="SUPFAM" id="SSF56496">
    <property type="entry name" value="Fibrinogen C-terminal domain-like"/>
    <property type="match status" value="1"/>
</dbReference>
<dbReference type="PROSITE" id="PS00514">
    <property type="entry name" value="FIBRINOGEN_C_1"/>
    <property type="match status" value="1"/>
</dbReference>
<dbReference type="PROSITE" id="PS51406">
    <property type="entry name" value="FIBRINOGEN_C_2"/>
    <property type="match status" value="1"/>
</dbReference>
<sequence>LSTTCEGKDKGICNLNLALQLITDVRDNFPVCPSPPLPIDCEEVLQRDFKAIPNPIDVYCDMVTDGGGWTVIQRRGDFHGPIDYFYKDWQSYKKGFGDIEKEFWLGNENIFGLSNQRYALYDTFANDDEDHKYMLHISGYKGDAGDSMIGVHNEQKFSTKDKNDNFPGATSCAQLYKGGWWYNQCHVSNLNGQYLKSYADGVIWRSWKGYHESLGWTEIKIKDVK</sequence>
<protein>
    <recommendedName>
        <fullName>Techylectin-like protein</fullName>
    </recommendedName>
</protein>
<evidence type="ECO:0000250" key="1">
    <source>
        <dbReference type="UniProtKB" id="Q9U8W8"/>
    </source>
</evidence>
<evidence type="ECO:0000255" key="2"/>
<evidence type="ECO:0000255" key="3">
    <source>
        <dbReference type="PROSITE-ProRule" id="PRU00739"/>
    </source>
</evidence>
<evidence type="ECO:0000269" key="4">
    <source ref="1"/>
</evidence>
<evidence type="ECO:0000303" key="5">
    <source ref="1"/>
</evidence>
<evidence type="ECO:0000305" key="6"/>
<reference evidence="6" key="1">
    <citation type="submission" date="2006-10" db="UniProtKB">
        <title>Techylectin-like protein from venom of spider Phoneutria nigriventer has sequence similarities to fibrinogen and ficolins.</title>
        <authorList>
            <person name="Richardson M."/>
            <person name="Resende F.F."/>
            <person name="Souza I.A."/>
            <person name="Goncalves J.M."/>
            <person name="Borges M.H."/>
            <person name="Cordeiro M.N."/>
        </authorList>
    </citation>
    <scope>PROTEIN SEQUENCE</scope>
    <scope>SUBCELLULAR LOCATION</scope>
    <scope>TISSUE SPECIFICITY</scope>
    <source>
        <tissue evidence="4">Venom</tissue>
    </source>
</reference>
<keyword id="KW-0106">Calcium</keyword>
<keyword id="KW-0903">Direct protein sequencing</keyword>
<keyword id="KW-1015">Disulfide bond</keyword>
<keyword id="KW-0430">Lectin</keyword>
<keyword id="KW-0479">Metal-binding</keyword>
<keyword id="KW-0964">Secreted</keyword>
<accession>P85031</accession>